<comment type="function">
    <text evidence="1">Fluoride-specific ion channel. Important for reducing fluoride concentration in the cell, thus reducing its toxicity.</text>
</comment>
<comment type="catalytic activity">
    <reaction evidence="1">
        <text>fluoride(in) = fluoride(out)</text>
        <dbReference type="Rhea" id="RHEA:76159"/>
        <dbReference type="ChEBI" id="CHEBI:17051"/>
    </reaction>
    <physiologicalReaction direction="left-to-right" evidence="1">
        <dbReference type="Rhea" id="RHEA:76160"/>
    </physiologicalReaction>
</comment>
<comment type="activity regulation">
    <text evidence="1">Na(+) is not transported, but it plays an essential structural role and its presence is essential for fluoride channel function.</text>
</comment>
<comment type="subcellular location">
    <subcellularLocation>
        <location evidence="1">Cell membrane</location>
        <topology evidence="1">Multi-pass membrane protein</topology>
    </subcellularLocation>
</comment>
<comment type="similarity">
    <text evidence="1">Belongs to the fluoride channel Fluc/FEX (TC 1.A.43) family.</text>
</comment>
<protein>
    <recommendedName>
        <fullName evidence="1">Fluoride-specific ion channel FluC 1</fullName>
    </recommendedName>
</protein>
<accession>Q9K8M0</accession>
<name>FLUC1_HALH5</name>
<proteinExistence type="inferred from homology"/>
<gene>
    <name evidence="1" type="primary">fluC1</name>
    <name evidence="1" type="synonym">crcB1</name>
    <name type="ordered locus">BH2986</name>
</gene>
<feature type="chain" id="PRO_0000110048" description="Fluoride-specific ion channel FluC 1">
    <location>
        <begin position="1"/>
        <end position="127"/>
    </location>
</feature>
<feature type="transmembrane region" description="Helical" evidence="1">
    <location>
        <begin position="3"/>
        <end position="23"/>
    </location>
</feature>
<feature type="transmembrane region" description="Helical" evidence="1">
    <location>
        <begin position="35"/>
        <end position="55"/>
    </location>
</feature>
<feature type="transmembrane region" description="Helical" evidence="1">
    <location>
        <begin position="74"/>
        <end position="94"/>
    </location>
</feature>
<feature type="transmembrane region" description="Helical" evidence="1">
    <location>
        <begin position="102"/>
        <end position="122"/>
    </location>
</feature>
<feature type="binding site" evidence="1">
    <location>
        <position position="78"/>
    </location>
    <ligand>
        <name>Na(+)</name>
        <dbReference type="ChEBI" id="CHEBI:29101"/>
        <note>structural</note>
    </ligand>
</feature>
<feature type="binding site" evidence="1">
    <location>
        <position position="81"/>
    </location>
    <ligand>
        <name>Na(+)</name>
        <dbReference type="ChEBI" id="CHEBI:29101"/>
        <note>structural</note>
    </ligand>
</feature>
<sequence length="127" mass="14008">MNLLIVAIGGGIGAIARYLVGQWMMKRFPDPPFPIAMLVVNLLGSFGLGAFFGLYYHELFAASYDDIGYLFGGIGFFGAFTTYSTFSVEAVLLIREREWKKLFSYVLLSIVGSIAAFLLGFYGTSSW</sequence>
<dbReference type="EMBL" id="BA000004">
    <property type="protein sequence ID" value="BAB06705.1"/>
    <property type="molecule type" value="Genomic_DNA"/>
</dbReference>
<dbReference type="PIR" id="B84023">
    <property type="entry name" value="B84023"/>
</dbReference>
<dbReference type="RefSeq" id="WP_010899130.1">
    <property type="nucleotide sequence ID" value="NC_002570.2"/>
</dbReference>
<dbReference type="SMR" id="Q9K8M0"/>
<dbReference type="STRING" id="272558.gene:10728896"/>
<dbReference type="GeneID" id="87598506"/>
<dbReference type="KEGG" id="bha:BH2986"/>
<dbReference type="eggNOG" id="COG0239">
    <property type="taxonomic scope" value="Bacteria"/>
</dbReference>
<dbReference type="HOGENOM" id="CLU_114342_2_1_9"/>
<dbReference type="OrthoDB" id="9815830at2"/>
<dbReference type="Proteomes" id="UP000001258">
    <property type="component" value="Chromosome"/>
</dbReference>
<dbReference type="GO" id="GO:0005886">
    <property type="term" value="C:plasma membrane"/>
    <property type="evidence" value="ECO:0007669"/>
    <property type="project" value="UniProtKB-SubCell"/>
</dbReference>
<dbReference type="GO" id="GO:0062054">
    <property type="term" value="F:fluoride channel activity"/>
    <property type="evidence" value="ECO:0007669"/>
    <property type="project" value="UniProtKB-UniRule"/>
</dbReference>
<dbReference type="GO" id="GO:0046872">
    <property type="term" value="F:metal ion binding"/>
    <property type="evidence" value="ECO:0007669"/>
    <property type="project" value="UniProtKB-KW"/>
</dbReference>
<dbReference type="GO" id="GO:0140114">
    <property type="term" value="P:cellular detoxification of fluoride"/>
    <property type="evidence" value="ECO:0007669"/>
    <property type="project" value="UniProtKB-UniRule"/>
</dbReference>
<dbReference type="HAMAP" id="MF_00454">
    <property type="entry name" value="FluC"/>
    <property type="match status" value="1"/>
</dbReference>
<dbReference type="InterPro" id="IPR003691">
    <property type="entry name" value="FluC"/>
</dbReference>
<dbReference type="NCBIfam" id="TIGR00494">
    <property type="entry name" value="crcB"/>
    <property type="match status" value="1"/>
</dbReference>
<dbReference type="PANTHER" id="PTHR28259">
    <property type="entry name" value="FLUORIDE EXPORT PROTEIN 1-RELATED"/>
    <property type="match status" value="1"/>
</dbReference>
<dbReference type="PANTHER" id="PTHR28259:SF1">
    <property type="entry name" value="FLUORIDE EXPORT PROTEIN 1-RELATED"/>
    <property type="match status" value="1"/>
</dbReference>
<dbReference type="Pfam" id="PF02537">
    <property type="entry name" value="CRCB"/>
    <property type="match status" value="1"/>
</dbReference>
<keyword id="KW-1003">Cell membrane</keyword>
<keyword id="KW-0407">Ion channel</keyword>
<keyword id="KW-0406">Ion transport</keyword>
<keyword id="KW-0472">Membrane</keyword>
<keyword id="KW-0479">Metal-binding</keyword>
<keyword id="KW-1185">Reference proteome</keyword>
<keyword id="KW-0915">Sodium</keyword>
<keyword id="KW-0812">Transmembrane</keyword>
<keyword id="KW-1133">Transmembrane helix</keyword>
<keyword id="KW-0813">Transport</keyword>
<organism>
    <name type="scientific">Halalkalibacterium halodurans (strain ATCC BAA-125 / DSM 18197 / FERM 7344 / JCM 9153 / C-125)</name>
    <name type="common">Bacillus halodurans</name>
    <dbReference type="NCBI Taxonomy" id="272558"/>
    <lineage>
        <taxon>Bacteria</taxon>
        <taxon>Bacillati</taxon>
        <taxon>Bacillota</taxon>
        <taxon>Bacilli</taxon>
        <taxon>Bacillales</taxon>
        <taxon>Bacillaceae</taxon>
        <taxon>Halalkalibacterium (ex Joshi et al. 2022)</taxon>
    </lineage>
</organism>
<reference key="1">
    <citation type="journal article" date="2000" name="Nucleic Acids Res.">
        <title>Complete genome sequence of the alkaliphilic bacterium Bacillus halodurans and genomic sequence comparison with Bacillus subtilis.</title>
        <authorList>
            <person name="Takami H."/>
            <person name="Nakasone K."/>
            <person name="Takaki Y."/>
            <person name="Maeno G."/>
            <person name="Sasaki R."/>
            <person name="Masui N."/>
            <person name="Fuji F."/>
            <person name="Hirama C."/>
            <person name="Nakamura Y."/>
            <person name="Ogasawara N."/>
            <person name="Kuhara S."/>
            <person name="Horikoshi K."/>
        </authorList>
    </citation>
    <scope>NUCLEOTIDE SEQUENCE [LARGE SCALE GENOMIC DNA]</scope>
    <source>
        <strain>ATCC BAA-125 / DSM 18197 / FERM 7344 / JCM 9153 / C-125</strain>
    </source>
</reference>
<evidence type="ECO:0000255" key="1">
    <source>
        <dbReference type="HAMAP-Rule" id="MF_00454"/>
    </source>
</evidence>